<dbReference type="EC" id="2.8.3.-" evidence="3"/>
<dbReference type="EMBL" id="AE007869">
    <property type="protein sequence ID" value="AAK87874.2"/>
    <property type="molecule type" value="Genomic_DNA"/>
</dbReference>
<dbReference type="RefSeq" id="NP_355089.2">
    <property type="nucleotide sequence ID" value="NC_003062.2"/>
</dbReference>
<dbReference type="RefSeq" id="WP_010972076.1">
    <property type="nucleotide sequence ID" value="NC_003062.2"/>
</dbReference>
<dbReference type="SMR" id="Q7CXU0"/>
<dbReference type="STRING" id="176299.Atu2127"/>
<dbReference type="EnsemblBacteria" id="AAK87874">
    <property type="protein sequence ID" value="AAK87874"/>
    <property type="gene ID" value="Atu2127"/>
</dbReference>
<dbReference type="GeneID" id="1134165"/>
<dbReference type="KEGG" id="atu:Atu2127"/>
<dbReference type="PATRIC" id="fig|176299.10.peg.2140"/>
<dbReference type="eggNOG" id="COG1804">
    <property type="taxonomic scope" value="Bacteria"/>
</dbReference>
<dbReference type="HOGENOM" id="CLU_033975_0_0_5"/>
<dbReference type="OrthoDB" id="9806585at2"/>
<dbReference type="PhylomeDB" id="Q7CXU0"/>
<dbReference type="BioCyc" id="MetaCyc:MONOMER-21427"/>
<dbReference type="UniPathway" id="UPA00078"/>
<dbReference type="Proteomes" id="UP000000813">
    <property type="component" value="Chromosome circular"/>
</dbReference>
<dbReference type="GO" id="GO:0008410">
    <property type="term" value="F:CoA-transferase activity"/>
    <property type="evidence" value="ECO:0007669"/>
    <property type="project" value="TreeGrafter"/>
</dbReference>
<dbReference type="GO" id="GO:0009102">
    <property type="term" value="P:biotin biosynthetic process"/>
    <property type="evidence" value="ECO:0007669"/>
    <property type="project" value="UniProtKB-UniPathway"/>
</dbReference>
<dbReference type="Gene3D" id="3.40.50.10540">
    <property type="entry name" value="Crotonobetainyl-coa:carnitine coa-transferase, domain 1"/>
    <property type="match status" value="1"/>
</dbReference>
<dbReference type="Gene3D" id="3.30.1540.10">
    <property type="entry name" value="formyl-coa transferase, domain 3"/>
    <property type="match status" value="1"/>
</dbReference>
<dbReference type="InterPro" id="IPR050483">
    <property type="entry name" value="CoA-transferase_III_domain"/>
</dbReference>
<dbReference type="InterPro" id="IPR003673">
    <property type="entry name" value="CoA-Trfase_fam_III"/>
</dbReference>
<dbReference type="InterPro" id="IPR044855">
    <property type="entry name" value="CoA-Trfase_III_dom3_sf"/>
</dbReference>
<dbReference type="InterPro" id="IPR023606">
    <property type="entry name" value="CoA-Trfase_III_dom_1_sf"/>
</dbReference>
<dbReference type="PANTHER" id="PTHR48207">
    <property type="entry name" value="SUCCINATE--HYDROXYMETHYLGLUTARATE COA-TRANSFERASE"/>
    <property type="match status" value="1"/>
</dbReference>
<dbReference type="PANTHER" id="PTHR48207:SF3">
    <property type="entry name" value="SUCCINATE--HYDROXYMETHYLGLUTARATE COA-TRANSFERASE"/>
    <property type="match status" value="1"/>
</dbReference>
<dbReference type="Pfam" id="PF02515">
    <property type="entry name" value="CoA_transf_3"/>
    <property type="match status" value="1"/>
</dbReference>
<dbReference type="SUPFAM" id="SSF89796">
    <property type="entry name" value="CoA-transferase family III (CaiB/BaiF)"/>
    <property type="match status" value="1"/>
</dbReference>
<comment type="function">
    <text evidence="3">Is involved in L-lysine degradation and provides glutaryl-CoA for biotin synthesis. Catalyzes the conversion of glutarate to glutaryl-CoA via the transfer of CoA from succinyl-CoA.</text>
</comment>
<comment type="catalytic activity">
    <reaction evidence="2">
        <text>glutarate + succinyl-CoA = glutaryl-CoA + succinate</text>
        <dbReference type="Rhea" id="RHEA:67900"/>
        <dbReference type="ChEBI" id="CHEBI:30031"/>
        <dbReference type="ChEBI" id="CHEBI:30921"/>
        <dbReference type="ChEBI" id="CHEBI:57292"/>
        <dbReference type="ChEBI" id="CHEBI:57378"/>
    </reaction>
    <physiologicalReaction direction="left-to-right" evidence="2">
        <dbReference type="Rhea" id="RHEA:67901"/>
    </physiologicalReaction>
</comment>
<comment type="pathway">
    <text evidence="3">Amino-acid degradation.</text>
</comment>
<comment type="pathway">
    <text evidence="3">Cofactor biosynthesis; biotin biosynthesis.</text>
</comment>
<comment type="disruption phenotype">
    <text evidence="3">Inactivation of the gene leads to biotin auxotrophy.</text>
</comment>
<comment type="similarity">
    <text evidence="5">Belongs to the CoA-transferase III family.</text>
</comment>
<reference key="1">
    <citation type="journal article" date="2001" name="Science">
        <title>The genome of the natural genetic engineer Agrobacterium tumefaciens C58.</title>
        <authorList>
            <person name="Wood D.W."/>
            <person name="Setubal J.C."/>
            <person name="Kaul R."/>
            <person name="Monks D.E."/>
            <person name="Kitajima J.P."/>
            <person name="Okura V.K."/>
            <person name="Zhou Y."/>
            <person name="Chen L."/>
            <person name="Wood G.E."/>
            <person name="Almeida N.F. Jr."/>
            <person name="Woo L."/>
            <person name="Chen Y."/>
            <person name="Paulsen I.T."/>
            <person name="Eisen J.A."/>
            <person name="Karp P.D."/>
            <person name="Bovee D. Sr."/>
            <person name="Chapman P."/>
            <person name="Clendenning J."/>
            <person name="Deatherage G."/>
            <person name="Gillet W."/>
            <person name="Grant C."/>
            <person name="Kutyavin T."/>
            <person name="Levy R."/>
            <person name="Li M.-J."/>
            <person name="McClelland E."/>
            <person name="Palmieri A."/>
            <person name="Raymond C."/>
            <person name="Rouse G."/>
            <person name="Saenphimmachak C."/>
            <person name="Wu Z."/>
            <person name="Romero P."/>
            <person name="Gordon D."/>
            <person name="Zhang S."/>
            <person name="Yoo H."/>
            <person name="Tao Y."/>
            <person name="Biddle P."/>
            <person name="Jung M."/>
            <person name="Krespan W."/>
            <person name="Perry M."/>
            <person name="Gordon-Kamm B."/>
            <person name="Liao L."/>
            <person name="Kim S."/>
            <person name="Hendrick C."/>
            <person name="Zhao Z.-Y."/>
            <person name="Dolan M."/>
            <person name="Chumley F."/>
            <person name="Tingey S.V."/>
            <person name="Tomb J.-F."/>
            <person name="Gordon M.P."/>
            <person name="Olson M.V."/>
            <person name="Nester E.W."/>
        </authorList>
    </citation>
    <scope>NUCLEOTIDE SEQUENCE [LARGE SCALE GENOMIC DNA]</scope>
    <source>
        <strain>C58 / ATCC 33970</strain>
    </source>
</reference>
<reference key="2">
    <citation type="journal article" date="2001" name="Science">
        <title>Genome sequence of the plant pathogen and biotechnology agent Agrobacterium tumefaciens C58.</title>
        <authorList>
            <person name="Goodner B."/>
            <person name="Hinkle G."/>
            <person name="Gattung S."/>
            <person name="Miller N."/>
            <person name="Blanchard M."/>
            <person name="Qurollo B."/>
            <person name="Goldman B.S."/>
            <person name="Cao Y."/>
            <person name="Askenazi M."/>
            <person name="Halling C."/>
            <person name="Mullin L."/>
            <person name="Houmiel K."/>
            <person name="Gordon J."/>
            <person name="Vaudin M."/>
            <person name="Iartchouk O."/>
            <person name="Epp A."/>
            <person name="Liu F."/>
            <person name="Wollam C."/>
            <person name="Allinger M."/>
            <person name="Doughty D."/>
            <person name="Scott C."/>
            <person name="Lappas C."/>
            <person name="Markelz B."/>
            <person name="Flanagan C."/>
            <person name="Crowell C."/>
            <person name="Gurson J."/>
            <person name="Lomo C."/>
            <person name="Sear C."/>
            <person name="Strub G."/>
            <person name="Cielo C."/>
            <person name="Slater S."/>
        </authorList>
    </citation>
    <scope>NUCLEOTIDE SEQUENCE [LARGE SCALE GENOMIC DNA]</scope>
    <source>
        <strain>C58 / ATCC 33970</strain>
    </source>
</reference>
<reference key="3">
    <citation type="journal article" date="2020" name="Nat. Commun.">
        <title>Alpha-proteobacteria synthesize biotin precursor pimeloyl-ACP using BioZ 3-ketoacyl-ACP synthase and lysine catabolism.</title>
        <authorList>
            <person name="Hu Y."/>
            <person name="Cronan J.E."/>
        </authorList>
    </citation>
    <scope>FUNCTION</scope>
    <scope>CATALYTIC ACTIVITY</scope>
    <scope>PATHWAY</scope>
    <scope>DISRUPTION PHENOTYPE</scope>
    <source>
        <strain>C58 / ATCC 33970</strain>
    </source>
</reference>
<sequence>MTDMPNRKPPLSGIRVIELARVLAGPWAGQMLADMGADVIKVENPEGGDDTRAWGPPFVESADGENLSAAYYHATNRGKRSIVADLKTPEGCALVRRLVRTADVVIENFKRDGLAKYGLDYESLRVLNPKLIYCSITGFGQTGPYADFAGYDYIVQGMSGFMSITGEPDGQPMKAGVAVADIFTGIYSVSAIQAALIHAMRSGEGQHIDMALLDVQSAVLANQNMNYLISGRPPIRLGNAHPNISPYEVVPTADGFLILAVGNDGQFRRLCNILGIGAIADDERYATNKARVAHKVEVRQIISTETLKWNKRDLLTACETNAVPAGPINSIEEMFADPQVQARGLRVDLEAEDGTVIPGVRTPIIMSQTPLRYERPSPKLGEHQAQVLAELETIERTATP</sequence>
<feature type="chain" id="PRO_0000453796" description="Succinate--glutarate CoA-transferase">
    <location>
        <begin position="1"/>
        <end position="400"/>
    </location>
</feature>
<feature type="active site" description="Nucleophile" evidence="1">
    <location>
        <position position="181"/>
    </location>
</feature>
<keyword id="KW-0093">Biotin biosynthesis</keyword>
<keyword id="KW-1185">Reference proteome</keyword>
<keyword id="KW-0808">Transferase</keyword>
<accession>Q7CXU0</accession>
<evidence type="ECO:0000250" key="1">
    <source>
        <dbReference type="UniProtKB" id="P69902"/>
    </source>
</evidence>
<evidence type="ECO:0000269" key="2">
    <source>
    </source>
</evidence>
<evidence type="ECO:0000269" key="3">
    <source>
    </source>
</evidence>
<evidence type="ECO:0000303" key="4">
    <source>
    </source>
</evidence>
<evidence type="ECO:0000305" key="5"/>
<evidence type="ECO:0000312" key="6">
    <source>
        <dbReference type="EMBL" id="AAK87874.2"/>
    </source>
</evidence>
<name>SGCOT_AGRFC</name>
<proteinExistence type="evidence at protein level"/>
<protein>
    <recommendedName>
        <fullName evidence="5">Succinate--glutarate CoA-transferase</fullName>
        <ecNumber evidence="3">2.8.3.-</ecNumber>
    </recommendedName>
</protein>
<gene>
    <name evidence="4" type="primary">caiB</name>
    <name evidence="6" type="ordered locus">Atu2127</name>
</gene>
<organism>
    <name type="scientific">Agrobacterium fabrum (strain C58 / ATCC 33970)</name>
    <name type="common">Agrobacterium tumefaciens (strain C58)</name>
    <dbReference type="NCBI Taxonomy" id="176299"/>
    <lineage>
        <taxon>Bacteria</taxon>
        <taxon>Pseudomonadati</taxon>
        <taxon>Pseudomonadota</taxon>
        <taxon>Alphaproteobacteria</taxon>
        <taxon>Hyphomicrobiales</taxon>
        <taxon>Rhizobiaceae</taxon>
        <taxon>Rhizobium/Agrobacterium group</taxon>
        <taxon>Agrobacterium</taxon>
        <taxon>Agrobacterium tumefaciens complex</taxon>
    </lineage>
</organism>